<comment type="function">
    <text evidence="1">Catalyzes the formation of phosphodiester linkages between 5'-phosphoryl and 3'-hydroxyl groups in double-stranded DNA using NAD as a coenzyme and as the energy source for the reaction.</text>
</comment>
<comment type="catalytic activity">
    <reaction evidence="1">
        <text>NAD(+) + (deoxyribonucleotide)n-3'-hydroxyl + 5'-phospho-(deoxyribonucleotide)m = (deoxyribonucleotide)n+m + AMP + beta-nicotinamide D-nucleotide.</text>
        <dbReference type="EC" id="6.5.1.2"/>
    </reaction>
</comment>
<comment type="similarity">
    <text evidence="1">Belongs to the NAD-dependent DNA ligase family. LigB subfamily.</text>
</comment>
<dbReference type="EC" id="6.5.1.2" evidence="1"/>
<dbReference type="EMBL" id="CP001144">
    <property type="protein sequence ID" value="ACH76115.1"/>
    <property type="molecule type" value="Genomic_DNA"/>
</dbReference>
<dbReference type="RefSeq" id="WP_001241843.1">
    <property type="nucleotide sequence ID" value="NC_011205.1"/>
</dbReference>
<dbReference type="SMR" id="B5FM71"/>
<dbReference type="KEGG" id="sed:SeD_A4126"/>
<dbReference type="HOGENOM" id="CLU_489786_0_0_6"/>
<dbReference type="Proteomes" id="UP000008322">
    <property type="component" value="Chromosome"/>
</dbReference>
<dbReference type="GO" id="GO:0003911">
    <property type="term" value="F:DNA ligase (NAD+) activity"/>
    <property type="evidence" value="ECO:0007669"/>
    <property type="project" value="UniProtKB-UniRule"/>
</dbReference>
<dbReference type="GO" id="GO:0006281">
    <property type="term" value="P:DNA repair"/>
    <property type="evidence" value="ECO:0007669"/>
    <property type="project" value="UniProtKB-KW"/>
</dbReference>
<dbReference type="GO" id="GO:0006260">
    <property type="term" value="P:DNA replication"/>
    <property type="evidence" value="ECO:0007669"/>
    <property type="project" value="UniProtKB-KW"/>
</dbReference>
<dbReference type="FunFam" id="1.10.287.610:FF:000003">
    <property type="entry name" value="DNA ligase B"/>
    <property type="match status" value="1"/>
</dbReference>
<dbReference type="FunFam" id="2.40.50.140:FF:000139">
    <property type="entry name" value="DNA ligase B"/>
    <property type="match status" value="1"/>
</dbReference>
<dbReference type="FunFam" id="3.30.470.30:FF:000007">
    <property type="entry name" value="DNA ligase B"/>
    <property type="match status" value="1"/>
</dbReference>
<dbReference type="Gene3D" id="1.10.150.20">
    <property type="entry name" value="5' to 3' exonuclease, C-terminal subdomain"/>
    <property type="match status" value="1"/>
</dbReference>
<dbReference type="Gene3D" id="3.30.470.30">
    <property type="entry name" value="DNA ligase/mRNA capping enzyme"/>
    <property type="match status" value="1"/>
</dbReference>
<dbReference type="Gene3D" id="1.10.287.610">
    <property type="entry name" value="Helix hairpin bin"/>
    <property type="match status" value="1"/>
</dbReference>
<dbReference type="Gene3D" id="2.40.50.140">
    <property type="entry name" value="Nucleic acid-binding proteins"/>
    <property type="match status" value="1"/>
</dbReference>
<dbReference type="HAMAP" id="MF_01587">
    <property type="entry name" value="DNA_ligase_B"/>
    <property type="match status" value="1"/>
</dbReference>
<dbReference type="InterPro" id="IPR018239">
    <property type="entry name" value="DNA_ligase_AS"/>
</dbReference>
<dbReference type="InterPro" id="IPR020923">
    <property type="entry name" value="DNA_ligase_B"/>
</dbReference>
<dbReference type="InterPro" id="IPR033136">
    <property type="entry name" value="DNA_ligase_CS"/>
</dbReference>
<dbReference type="InterPro" id="IPR013839">
    <property type="entry name" value="DNAligase_adenylation"/>
</dbReference>
<dbReference type="InterPro" id="IPR013840">
    <property type="entry name" value="DNAligase_N"/>
</dbReference>
<dbReference type="InterPro" id="IPR012340">
    <property type="entry name" value="NA-bd_OB-fold"/>
</dbReference>
<dbReference type="InterPro" id="IPR050326">
    <property type="entry name" value="NAD_dep_DNA_ligaseB"/>
</dbReference>
<dbReference type="InterPro" id="IPR004150">
    <property type="entry name" value="NAD_DNA_ligase_OB"/>
</dbReference>
<dbReference type="InterPro" id="IPR010994">
    <property type="entry name" value="RuvA_2-like"/>
</dbReference>
<dbReference type="NCBIfam" id="NF005987">
    <property type="entry name" value="PRK08097.1"/>
    <property type="match status" value="1"/>
</dbReference>
<dbReference type="PANTHER" id="PTHR47810">
    <property type="entry name" value="DNA LIGASE"/>
    <property type="match status" value="1"/>
</dbReference>
<dbReference type="PANTHER" id="PTHR47810:SF1">
    <property type="entry name" value="DNA LIGASE B"/>
    <property type="match status" value="1"/>
</dbReference>
<dbReference type="Pfam" id="PF01653">
    <property type="entry name" value="DNA_ligase_aden"/>
    <property type="match status" value="1"/>
</dbReference>
<dbReference type="Pfam" id="PF03120">
    <property type="entry name" value="DNA_ligase_OB"/>
    <property type="match status" value="1"/>
</dbReference>
<dbReference type="SMART" id="SM00532">
    <property type="entry name" value="LIGANc"/>
    <property type="match status" value="1"/>
</dbReference>
<dbReference type="SUPFAM" id="SSF56091">
    <property type="entry name" value="DNA ligase/mRNA capping enzyme, catalytic domain"/>
    <property type="match status" value="1"/>
</dbReference>
<dbReference type="SUPFAM" id="SSF50249">
    <property type="entry name" value="Nucleic acid-binding proteins"/>
    <property type="match status" value="1"/>
</dbReference>
<dbReference type="SUPFAM" id="SSF47781">
    <property type="entry name" value="RuvA domain 2-like"/>
    <property type="match status" value="1"/>
</dbReference>
<dbReference type="PROSITE" id="PS01055">
    <property type="entry name" value="DNA_LIGASE_N1"/>
    <property type="match status" value="1"/>
</dbReference>
<dbReference type="PROSITE" id="PS01056">
    <property type="entry name" value="DNA_LIGASE_N2"/>
    <property type="match status" value="1"/>
</dbReference>
<gene>
    <name evidence="1" type="primary">ligB</name>
    <name type="ordered locus">SeD_A4126</name>
</gene>
<accession>B5FM71</accession>
<sequence length="561" mass="62911">MRLWKSMAWGILLWHSQSGALCPAWPPARAAEEITRLQQQLADWNDIYWKQGVSAVDDSVYDQLSARLVQWQRCVGQDVSSTPVSPPLNGTTMHPVAHTGVRKLADRQAVEQWMRGRSELWVQPKVDGVAVTLVYQNGKLTRAISRGNGLQGEDWTPKIRLIPSIPQTTQGALANAVLQGEIFLQREGHIQQRMGGMNARSKAAGMLMRQDNASALNSLGIFIWAWPDGPANMPERLSQLAKAGFSLTKKYSLAVKDASEVERARQSWLTSALPFVTDGVVIRMAKEPASQYWRPGQGDWLAAWKYPPVAQVAQVSAIQFSVGKSGKITVVASLVPVILDDKRVQRVNIGSVKRWEAWDIAPGDQILVSLAGQGIPRLDEVVWRSRERSKPVPPDSHFNSLTCFYASETCQEQFISRLVWLGSRSALGLDGMGEASWRALHQTHRFEHIFSWLALTSAQIANTPGFAKGKSEQIWRQFNLARRQPFTRWIMAMDIPLTQAALQASGDRSWEQLLMRTEQHWRQLPATGERRAGRVIDWRDNPQIKTLSRWLAAQHIPGFGS</sequence>
<evidence type="ECO:0000255" key="1">
    <source>
        <dbReference type="HAMAP-Rule" id="MF_01587"/>
    </source>
</evidence>
<keyword id="KW-0227">DNA damage</keyword>
<keyword id="KW-0234">DNA repair</keyword>
<keyword id="KW-0235">DNA replication</keyword>
<keyword id="KW-0436">Ligase</keyword>
<keyword id="KW-0520">NAD</keyword>
<proteinExistence type="inferred from homology"/>
<reference key="1">
    <citation type="journal article" date="2011" name="J. Bacteriol.">
        <title>Comparative genomics of 28 Salmonella enterica isolates: evidence for CRISPR-mediated adaptive sublineage evolution.</title>
        <authorList>
            <person name="Fricke W.F."/>
            <person name="Mammel M.K."/>
            <person name="McDermott P.F."/>
            <person name="Tartera C."/>
            <person name="White D.G."/>
            <person name="Leclerc J.E."/>
            <person name="Ravel J."/>
            <person name="Cebula T.A."/>
        </authorList>
    </citation>
    <scope>NUCLEOTIDE SEQUENCE [LARGE SCALE GENOMIC DNA]</scope>
    <source>
        <strain>CT_02021853</strain>
    </source>
</reference>
<feature type="chain" id="PRO_1000147727" description="DNA ligase B">
    <location>
        <begin position="1"/>
        <end position="561"/>
    </location>
</feature>
<feature type="active site" description="N6-AMP-lysine intermediate" evidence="1">
    <location>
        <position position="125"/>
    </location>
</feature>
<name>LIGB_SALDC</name>
<protein>
    <recommendedName>
        <fullName evidence="1">DNA ligase B</fullName>
        <ecNumber evidence="1">6.5.1.2</ecNumber>
    </recommendedName>
    <alternativeName>
        <fullName evidence="1">Polydeoxyribonucleotide synthase [NAD(+)] B</fullName>
    </alternativeName>
</protein>
<organism>
    <name type="scientific">Salmonella dublin (strain CT_02021853)</name>
    <dbReference type="NCBI Taxonomy" id="439851"/>
    <lineage>
        <taxon>Bacteria</taxon>
        <taxon>Pseudomonadati</taxon>
        <taxon>Pseudomonadota</taxon>
        <taxon>Gammaproteobacteria</taxon>
        <taxon>Enterobacterales</taxon>
        <taxon>Enterobacteriaceae</taxon>
        <taxon>Salmonella</taxon>
    </lineage>
</organism>